<feature type="signal peptide" evidence="5">
    <location>
        <begin position="1"/>
        <end position="24"/>
    </location>
</feature>
<feature type="propeptide" id="PRO_0000391824" evidence="1">
    <location>
        <begin position="25"/>
        <end position="45"/>
    </location>
</feature>
<feature type="chain" id="PRO_0000391825" description="Alpha-conotoxin-like Mi20.4">
    <location>
        <begin position="46"/>
        <end position="92"/>
    </location>
</feature>
<feature type="modified residue" description="4-hydroxyproline" evidence="1">
    <location>
        <position position="55"/>
    </location>
</feature>
<feature type="disulfide bond" description="Interchain (with C-63)" evidence="2">
    <location>
        <position position="50"/>
    </location>
</feature>
<feature type="disulfide bond" description="Interchain (with C-51)" evidence="2">
    <location>
        <position position="62"/>
    </location>
</feature>
<feature type="disulfide bond" evidence="2">
    <location>
        <begin position="63"/>
        <end position="72"/>
    </location>
</feature>
<feature type="disulfide bond" evidence="2">
    <location>
        <begin position="68"/>
        <end position="80"/>
    </location>
</feature>
<feature type="disulfide bond" evidence="2">
    <location>
        <begin position="73"/>
        <end position="90"/>
    </location>
</feature>
<feature type="disulfide bond" evidence="2">
    <location>
        <begin position="78"/>
        <end position="92"/>
    </location>
</feature>
<evidence type="ECO:0000250" key="1"/>
<evidence type="ECO:0000250" key="2">
    <source>
        <dbReference type="UniProtKB" id="A0A0A0VBX4"/>
    </source>
</evidence>
<evidence type="ECO:0000250" key="3">
    <source>
        <dbReference type="UniProtKB" id="C3VVN5"/>
    </source>
</evidence>
<evidence type="ECO:0000250" key="4">
    <source>
        <dbReference type="UniProtKB" id="P0C1W6"/>
    </source>
</evidence>
<evidence type="ECO:0000255" key="5"/>
<evidence type="ECO:0000303" key="6">
    <source>
    </source>
</evidence>
<evidence type="ECO:0000305" key="7"/>
<evidence type="ECO:0000305" key="8">
    <source>
    </source>
</evidence>
<protein>
    <recommendedName>
        <fullName evidence="7">Alpha-conotoxin-like Mi20.4</fullName>
    </recommendedName>
    <alternativeName>
        <fullName evidence="6">Alpha-conotoxin-like Ml20.4</fullName>
    </alternativeName>
</protein>
<organism>
    <name type="scientific">Conus miles</name>
    <name type="common">Soldier cone</name>
    <name type="synonym">Mile cone</name>
    <dbReference type="NCBI Taxonomy" id="69564"/>
    <lineage>
        <taxon>Eukaryota</taxon>
        <taxon>Metazoa</taxon>
        <taxon>Spiralia</taxon>
        <taxon>Lophotrochozoa</taxon>
        <taxon>Mollusca</taxon>
        <taxon>Gastropoda</taxon>
        <taxon>Caenogastropoda</taxon>
        <taxon>Neogastropoda</taxon>
        <taxon>Conoidea</taxon>
        <taxon>Conidae</taxon>
        <taxon>Conus</taxon>
        <taxon>Rhizoconus</taxon>
    </lineage>
</organism>
<proteinExistence type="inferred from homology"/>
<accession>P0CE33</accession>
<name>CXAT4_CONMI</name>
<dbReference type="SMR" id="P0CE33"/>
<dbReference type="GO" id="GO:0005576">
    <property type="term" value="C:extracellular region"/>
    <property type="evidence" value="ECO:0007669"/>
    <property type="project" value="UniProtKB-SubCell"/>
</dbReference>
<dbReference type="GO" id="GO:0035792">
    <property type="term" value="C:host cell postsynaptic membrane"/>
    <property type="evidence" value="ECO:0007669"/>
    <property type="project" value="UniProtKB-KW"/>
</dbReference>
<dbReference type="GO" id="GO:0030550">
    <property type="term" value="F:acetylcholine receptor inhibitor activity"/>
    <property type="evidence" value="ECO:0007669"/>
    <property type="project" value="UniProtKB-KW"/>
</dbReference>
<dbReference type="GO" id="GO:0099106">
    <property type="term" value="F:ion channel regulator activity"/>
    <property type="evidence" value="ECO:0007669"/>
    <property type="project" value="UniProtKB-KW"/>
</dbReference>
<dbReference type="GO" id="GO:0090729">
    <property type="term" value="F:toxin activity"/>
    <property type="evidence" value="ECO:0007669"/>
    <property type="project" value="UniProtKB-KW"/>
</dbReference>
<comment type="function">
    <text evidence="4">Alpha-conotoxins act on postsynaptic membranes, they bind to the nicotinic acetylcholine receptors (nAChR) and thus inhibit them. Through its two C-terminal domains, this homodimeric protein would bind to two nAChR allosteric sites, located outside the nAChR C-loop of the principal binding face and at the adjacent binding interface in a clockwise direction. This toxin specifically blocks mammalian neuronal nAChR of the alpha-7/CHRNA7, alpha-3-beta-2/CHRNA3-CHRNB2 and alpha-4-beta-2/CHRNA4-CHRNB2 subtypes.</text>
</comment>
<comment type="subunit">
    <text evidence="3">Hetero-, homo- or pseudo-homodimer (identical sequence, different post-translational modifications).</text>
</comment>
<comment type="subcellular location">
    <subcellularLocation>
        <location evidence="8">Secreted</location>
    </subcellularLocation>
</comment>
<comment type="tissue specificity">
    <text evidence="8">Expressed by the venom duct.</text>
</comment>
<comment type="domain">
    <text evidence="7">The cysteine framework is XX (C-CC-C-CC-C-C-C-C).</text>
</comment>
<comment type="domain">
    <text evidence="4">Displays a mini-granulin fold, a structure composed of two short, stacked beta-hairpins connected by two parallel disulfide bonds. This newly described fold is derived from the same cysteine connectivity as knottins (ICK fold). The name 'mini-granulin fold' comes from the structural homology with the N-terminal region of the human granulin.</text>
</comment>
<comment type="similarity">
    <text evidence="7">Belongs to the conotoxin D superfamily.</text>
</comment>
<keyword id="KW-0008">Acetylcholine receptor inhibiting toxin</keyword>
<keyword id="KW-1015">Disulfide bond</keyword>
<keyword id="KW-0379">Hydroxylation</keyword>
<keyword id="KW-0872">Ion channel impairing toxin</keyword>
<keyword id="KW-0528">Neurotoxin</keyword>
<keyword id="KW-0629">Postsynaptic neurotoxin</keyword>
<keyword id="KW-0964">Secreted</keyword>
<keyword id="KW-0732">Signal</keyword>
<keyword id="KW-0800">Toxin</keyword>
<sequence>MPKLEMMLLVLLIFPLSYFIAAGGQVVQVDRRGDGLAGYLQRGDRDVQDCQVSTPGSKWGRCCLNRVCGPMCCPASHCYCVYHRGRGHGCSC</sequence>
<reference key="1">
    <citation type="journal article" date="2009" name="Biochemistry">
        <title>Novel alpha D-conopeptides and their precursors identified by cDNA cloning define the D-conotoxin superfamily.</title>
        <authorList>
            <person name="Loughnan M.L."/>
            <person name="Nicke A."/>
            <person name="Lawrence N."/>
            <person name="Lewis R.J."/>
        </authorList>
    </citation>
    <scope>NUCLEOTIDE SEQUENCE [MRNA]</scope>
    <source>
        <tissue>Venom duct</tissue>
    </source>
</reference>